<protein>
    <recommendedName>
        <fullName evidence="1">4-diphosphocytidyl-2-C-methyl-D-erythritol kinase</fullName>
        <shortName evidence="1">CMK</shortName>
        <ecNumber evidence="1">2.7.1.148</ecNumber>
    </recommendedName>
    <alternativeName>
        <fullName evidence="1">4-(cytidine-5'-diphospho)-2-C-methyl-D-erythritol kinase</fullName>
    </alternativeName>
</protein>
<feature type="chain" id="PRO_1000092090" description="4-diphosphocytidyl-2-C-methyl-D-erythritol kinase">
    <location>
        <begin position="1"/>
        <end position="315"/>
    </location>
</feature>
<feature type="active site" evidence="1">
    <location>
        <position position="8"/>
    </location>
</feature>
<feature type="active site" evidence="1">
    <location>
        <position position="135"/>
    </location>
</feature>
<feature type="binding site" evidence="1">
    <location>
        <begin position="93"/>
        <end position="103"/>
    </location>
    <ligand>
        <name>ATP</name>
        <dbReference type="ChEBI" id="CHEBI:30616"/>
    </ligand>
</feature>
<dbReference type="EC" id="2.7.1.148" evidence="1"/>
<dbReference type="EMBL" id="CP000930">
    <property type="protein sequence ID" value="ABZ83817.1"/>
    <property type="molecule type" value="Genomic_DNA"/>
</dbReference>
<dbReference type="RefSeq" id="WP_012282336.1">
    <property type="nucleotide sequence ID" value="NC_010337.2"/>
</dbReference>
<dbReference type="SMR" id="B0TB90"/>
<dbReference type="STRING" id="498761.HM1_0738"/>
<dbReference type="KEGG" id="hmo:HM1_0738"/>
<dbReference type="eggNOG" id="COG1947">
    <property type="taxonomic scope" value="Bacteria"/>
</dbReference>
<dbReference type="HOGENOM" id="CLU_053057_1_1_9"/>
<dbReference type="UniPathway" id="UPA00056">
    <property type="reaction ID" value="UER00094"/>
</dbReference>
<dbReference type="Proteomes" id="UP000008550">
    <property type="component" value="Chromosome"/>
</dbReference>
<dbReference type="GO" id="GO:0050515">
    <property type="term" value="F:4-(cytidine 5'-diphospho)-2-C-methyl-D-erythritol kinase activity"/>
    <property type="evidence" value="ECO:0007669"/>
    <property type="project" value="UniProtKB-UniRule"/>
</dbReference>
<dbReference type="GO" id="GO:0005524">
    <property type="term" value="F:ATP binding"/>
    <property type="evidence" value="ECO:0007669"/>
    <property type="project" value="UniProtKB-UniRule"/>
</dbReference>
<dbReference type="GO" id="GO:0019288">
    <property type="term" value="P:isopentenyl diphosphate biosynthetic process, methylerythritol 4-phosphate pathway"/>
    <property type="evidence" value="ECO:0007669"/>
    <property type="project" value="UniProtKB-UniRule"/>
</dbReference>
<dbReference type="GO" id="GO:0016114">
    <property type="term" value="P:terpenoid biosynthetic process"/>
    <property type="evidence" value="ECO:0007669"/>
    <property type="project" value="InterPro"/>
</dbReference>
<dbReference type="Gene3D" id="3.30.230.10">
    <property type="match status" value="1"/>
</dbReference>
<dbReference type="Gene3D" id="3.30.70.890">
    <property type="entry name" value="GHMP kinase, C-terminal domain"/>
    <property type="match status" value="1"/>
</dbReference>
<dbReference type="HAMAP" id="MF_00061">
    <property type="entry name" value="IspE"/>
    <property type="match status" value="1"/>
</dbReference>
<dbReference type="InterPro" id="IPR013750">
    <property type="entry name" value="GHMP_kinase_C_dom"/>
</dbReference>
<dbReference type="InterPro" id="IPR036554">
    <property type="entry name" value="GHMP_kinase_C_sf"/>
</dbReference>
<dbReference type="InterPro" id="IPR006204">
    <property type="entry name" value="GHMP_kinase_N_dom"/>
</dbReference>
<dbReference type="InterPro" id="IPR004424">
    <property type="entry name" value="IspE"/>
</dbReference>
<dbReference type="InterPro" id="IPR020568">
    <property type="entry name" value="Ribosomal_Su5_D2-typ_SF"/>
</dbReference>
<dbReference type="InterPro" id="IPR014721">
    <property type="entry name" value="Ribsml_uS5_D2-typ_fold_subgr"/>
</dbReference>
<dbReference type="NCBIfam" id="TIGR00154">
    <property type="entry name" value="ispE"/>
    <property type="match status" value="1"/>
</dbReference>
<dbReference type="PANTHER" id="PTHR43527">
    <property type="entry name" value="4-DIPHOSPHOCYTIDYL-2-C-METHYL-D-ERYTHRITOL KINASE, CHLOROPLASTIC"/>
    <property type="match status" value="1"/>
</dbReference>
<dbReference type="PANTHER" id="PTHR43527:SF2">
    <property type="entry name" value="4-DIPHOSPHOCYTIDYL-2-C-METHYL-D-ERYTHRITOL KINASE, CHLOROPLASTIC"/>
    <property type="match status" value="1"/>
</dbReference>
<dbReference type="Pfam" id="PF08544">
    <property type="entry name" value="GHMP_kinases_C"/>
    <property type="match status" value="1"/>
</dbReference>
<dbReference type="Pfam" id="PF00288">
    <property type="entry name" value="GHMP_kinases_N"/>
    <property type="match status" value="1"/>
</dbReference>
<dbReference type="PIRSF" id="PIRSF010376">
    <property type="entry name" value="IspE"/>
    <property type="match status" value="1"/>
</dbReference>
<dbReference type="SUPFAM" id="SSF55060">
    <property type="entry name" value="GHMP Kinase, C-terminal domain"/>
    <property type="match status" value="1"/>
</dbReference>
<dbReference type="SUPFAM" id="SSF54211">
    <property type="entry name" value="Ribosomal protein S5 domain 2-like"/>
    <property type="match status" value="1"/>
</dbReference>
<name>ISPE_HELMI</name>
<sequence length="315" mass="33695">MRLLAPAKINLALDVLGRRADGYHQVVMVMQTIALADTVTVAVNEGHGAIRLAGGTEEAPPDADNLVYRAAQLVRETAGLSCGVDIDLEKVIPVAAGLAGGSSDAAATVKALNRLFRLGWSDREMETLLARLGSDIPFLVRGGTALATGRGEIVHRLPPAPAFWVVLVKPPFGASTPKVYKALGAPALPDPLPWPQAMKPATTPPGTAAYRMIEALKTGDYGNVLEALGNDLEQVTLEWHPVLKEIKVQLTRFGCDRALMSGSGPTILGFTASEATARSVAAAMEEQWGPQRYRVLIARTLEREEADEWNVDCCR</sequence>
<gene>
    <name evidence="1" type="primary">ispE</name>
    <name type="ordered locus">Helmi_11920</name>
    <name type="ORF">HM1_0738</name>
</gene>
<keyword id="KW-0067">ATP-binding</keyword>
<keyword id="KW-0414">Isoprene biosynthesis</keyword>
<keyword id="KW-0418">Kinase</keyword>
<keyword id="KW-0547">Nucleotide-binding</keyword>
<keyword id="KW-1185">Reference proteome</keyword>
<keyword id="KW-0808">Transferase</keyword>
<proteinExistence type="inferred from homology"/>
<reference key="1">
    <citation type="journal article" date="2008" name="J. Bacteriol.">
        <title>The genome of Heliobacterium modesticaldum, a phototrophic representative of the Firmicutes containing the simplest photosynthetic apparatus.</title>
        <authorList>
            <person name="Sattley W.M."/>
            <person name="Madigan M.T."/>
            <person name="Swingley W.D."/>
            <person name="Cheung P.C."/>
            <person name="Clocksin K.M."/>
            <person name="Conrad A.L."/>
            <person name="Dejesa L.C."/>
            <person name="Honchak B.M."/>
            <person name="Jung D.O."/>
            <person name="Karbach L.E."/>
            <person name="Kurdoglu A."/>
            <person name="Lahiri S."/>
            <person name="Mastrian S.D."/>
            <person name="Page L.E."/>
            <person name="Taylor H.L."/>
            <person name="Wang Z.T."/>
            <person name="Raymond J."/>
            <person name="Chen M."/>
            <person name="Blankenship R.E."/>
            <person name="Touchman J.W."/>
        </authorList>
    </citation>
    <scope>NUCLEOTIDE SEQUENCE [LARGE SCALE GENOMIC DNA]</scope>
    <source>
        <strain>ATCC 51547 / Ice1</strain>
    </source>
</reference>
<organism>
    <name type="scientific">Heliobacterium modesticaldum (strain ATCC 51547 / Ice1)</name>
    <dbReference type="NCBI Taxonomy" id="498761"/>
    <lineage>
        <taxon>Bacteria</taxon>
        <taxon>Bacillati</taxon>
        <taxon>Bacillota</taxon>
        <taxon>Clostridia</taxon>
        <taxon>Eubacteriales</taxon>
        <taxon>Heliobacteriaceae</taxon>
        <taxon>Heliomicrobium</taxon>
    </lineage>
</organism>
<accession>B0TB90</accession>
<comment type="function">
    <text evidence="1">Catalyzes the phosphorylation of the position 2 hydroxy group of 4-diphosphocytidyl-2C-methyl-D-erythritol.</text>
</comment>
<comment type="catalytic activity">
    <reaction evidence="1">
        <text>4-CDP-2-C-methyl-D-erythritol + ATP = 4-CDP-2-C-methyl-D-erythritol 2-phosphate + ADP + H(+)</text>
        <dbReference type="Rhea" id="RHEA:18437"/>
        <dbReference type="ChEBI" id="CHEBI:15378"/>
        <dbReference type="ChEBI" id="CHEBI:30616"/>
        <dbReference type="ChEBI" id="CHEBI:57823"/>
        <dbReference type="ChEBI" id="CHEBI:57919"/>
        <dbReference type="ChEBI" id="CHEBI:456216"/>
        <dbReference type="EC" id="2.7.1.148"/>
    </reaction>
</comment>
<comment type="pathway">
    <text evidence="1">Isoprenoid biosynthesis; isopentenyl diphosphate biosynthesis via DXP pathway; isopentenyl diphosphate from 1-deoxy-D-xylulose 5-phosphate: step 3/6.</text>
</comment>
<comment type="similarity">
    <text evidence="1">Belongs to the GHMP kinase family. IspE subfamily.</text>
</comment>
<evidence type="ECO:0000255" key="1">
    <source>
        <dbReference type="HAMAP-Rule" id="MF_00061"/>
    </source>
</evidence>